<dbReference type="EC" id="6.3.5.13" evidence="1 2 3"/>
<dbReference type="EMBL" id="BA000018">
    <property type="protein sequence ID" value="BAB42978.1"/>
    <property type="molecule type" value="Genomic_DNA"/>
</dbReference>
<dbReference type="RefSeq" id="WP_001250343.1">
    <property type="nucleotide sequence ID" value="NC_002745.2"/>
</dbReference>
<dbReference type="PDB" id="6GS2">
    <property type="method" value="X-ray"/>
    <property type="resolution" value="2.04 A"/>
    <property type="chains" value="B/D=1-437"/>
</dbReference>
<dbReference type="PDB" id="6H5E">
    <property type="method" value="X-ray"/>
    <property type="resolution" value="2.14 A"/>
    <property type="chains" value="B/D=1-437"/>
</dbReference>
<dbReference type="PDBsum" id="6GS2"/>
<dbReference type="PDBsum" id="6H5E"/>
<dbReference type="SMR" id="A0A0H3JUU7"/>
<dbReference type="EnsemblBacteria" id="BAB42978">
    <property type="protein sequence ID" value="BAB42978"/>
    <property type="gene ID" value="BAB42978"/>
</dbReference>
<dbReference type="KEGG" id="sau:SA1708"/>
<dbReference type="HOGENOM" id="CLU_041534_0_0_9"/>
<dbReference type="BRENDA" id="6.3.5.13">
    <property type="organism ID" value="3352"/>
</dbReference>
<dbReference type="UniPathway" id="UPA00219"/>
<dbReference type="GO" id="GO:0016881">
    <property type="term" value="F:acid-amino acid ligase activity"/>
    <property type="evidence" value="ECO:0007669"/>
    <property type="project" value="InterPro"/>
</dbReference>
<dbReference type="GO" id="GO:0005524">
    <property type="term" value="F:ATP binding"/>
    <property type="evidence" value="ECO:0007669"/>
    <property type="project" value="UniProtKB-UniRule"/>
</dbReference>
<dbReference type="GO" id="GO:0140282">
    <property type="term" value="F:carbon-nitrogen ligase activity on lipid II"/>
    <property type="evidence" value="ECO:0000314"/>
    <property type="project" value="CACAO"/>
</dbReference>
<dbReference type="GO" id="GO:0008270">
    <property type="term" value="F:zinc ion binding"/>
    <property type="evidence" value="ECO:0007669"/>
    <property type="project" value="UniProtKB-UniRule"/>
</dbReference>
<dbReference type="GO" id="GO:0071555">
    <property type="term" value="P:cell wall organization"/>
    <property type="evidence" value="ECO:0007669"/>
    <property type="project" value="UniProtKB-KW"/>
</dbReference>
<dbReference type="GO" id="GO:0009252">
    <property type="term" value="P:peptidoglycan biosynthetic process"/>
    <property type="evidence" value="ECO:0007669"/>
    <property type="project" value="UniProtKB-UniRule"/>
</dbReference>
<dbReference type="GO" id="GO:0008360">
    <property type="term" value="P:regulation of cell shape"/>
    <property type="evidence" value="ECO:0007669"/>
    <property type="project" value="UniProtKB-KW"/>
</dbReference>
<dbReference type="Gene3D" id="3.40.1190.10">
    <property type="entry name" value="Mur-like, catalytic domain"/>
    <property type="match status" value="1"/>
</dbReference>
<dbReference type="HAMAP" id="MF_02214">
    <property type="entry name" value="Lipid_II_synth_MurT"/>
    <property type="match status" value="1"/>
</dbReference>
<dbReference type="InterPro" id="IPR043703">
    <property type="entry name" value="Lipid_II_synth_MurT"/>
</dbReference>
<dbReference type="InterPro" id="IPR036565">
    <property type="entry name" value="Mur-like_cat_sf"/>
</dbReference>
<dbReference type="InterPro" id="IPR013221">
    <property type="entry name" value="Mur_ligase_cen"/>
</dbReference>
<dbReference type="InterPro" id="IPR013564">
    <property type="entry name" value="MurT_C"/>
</dbReference>
<dbReference type="PANTHER" id="PTHR23135:SF7">
    <property type="entry name" value="LIPID II ISOGLUTAMINYL SYNTHASE (GLUTAMINE-HYDROLYZING) SUBUNIT MURT"/>
    <property type="match status" value="1"/>
</dbReference>
<dbReference type="PANTHER" id="PTHR23135">
    <property type="entry name" value="MUR LIGASE FAMILY MEMBER"/>
    <property type="match status" value="1"/>
</dbReference>
<dbReference type="Pfam" id="PF08245">
    <property type="entry name" value="Mur_ligase_M"/>
    <property type="match status" value="1"/>
</dbReference>
<dbReference type="Pfam" id="PF08353">
    <property type="entry name" value="MurT_C"/>
    <property type="match status" value="1"/>
</dbReference>
<dbReference type="SUPFAM" id="SSF53623">
    <property type="entry name" value="MurD-like peptide ligases, catalytic domain"/>
    <property type="match status" value="1"/>
</dbReference>
<evidence type="ECO:0000255" key="1">
    <source>
        <dbReference type="HAMAP-Rule" id="MF_02214"/>
    </source>
</evidence>
<evidence type="ECO:0000269" key="2">
    <source>
    </source>
</evidence>
<evidence type="ECO:0000269" key="3">
    <source>
    </source>
</evidence>
<evidence type="ECO:0000303" key="4">
    <source>
    </source>
</evidence>
<evidence type="ECO:0000305" key="5"/>
<evidence type="ECO:0000305" key="6">
    <source>
    </source>
</evidence>
<evidence type="ECO:0000312" key="7">
    <source>
        <dbReference type="EMBL" id="BAB42978.1"/>
    </source>
</evidence>
<evidence type="ECO:0007744" key="8">
    <source>
        <dbReference type="PDB" id="6GS2"/>
    </source>
</evidence>
<evidence type="ECO:0007744" key="9">
    <source>
        <dbReference type="PDB" id="6H5E"/>
    </source>
</evidence>
<evidence type="ECO:0007829" key="10">
    <source>
        <dbReference type="PDB" id="6GS2"/>
    </source>
</evidence>
<evidence type="ECO:0007829" key="11">
    <source>
        <dbReference type="PDB" id="6H5E"/>
    </source>
</evidence>
<accession>A0A0H3JUU7</accession>
<keyword id="KW-0002">3D-structure</keyword>
<keyword id="KW-0067">ATP-binding</keyword>
<keyword id="KW-0133">Cell shape</keyword>
<keyword id="KW-0961">Cell wall biogenesis/degradation</keyword>
<keyword id="KW-0436">Ligase</keyword>
<keyword id="KW-0479">Metal-binding</keyword>
<keyword id="KW-0547">Nucleotide-binding</keyword>
<keyword id="KW-0573">Peptidoglycan synthesis</keyword>
<keyword id="KW-0862">Zinc</keyword>
<sequence length="437" mass="49192">MRQWTAIHLAKLARKASRAVGKRGTDLPGQIARKVDTDVLRKLAEQVDDIVFISGTNGKTTTSNLIGHTLKANNIQIIHNNEGANMAAGITSAFIMQSTPKTKIAVIEIDEGSIPRVLKEVTPSMMVFTNFFRDQMDRFGEIDIMVNNIAETISNKGIKLLLNADDPFVSRLKIASDTIVYYGMKAHAHEFEQSTMNESRYCPNCGRLLQYDYIHYNQIGHYHCQCGFKREQAKYEISSFDVAPFLYLNINDEKYDMKIAGDFNAYNALAAYTVLRELGLNEQTIKNGFETYTSDNGRMQYFKKERKEAMINLAKNPAGMNASLSVGEQLEGEKVYVISLNDNAADGRDTSWIYDADFEKLSKQQIEAIIVTGTRAEELQLRLKLAEVEVPIIVERDIYKATAKTMDYKGFTVAIPNYTSLAPMLEQLNRSFEGGQS</sequence>
<feature type="chain" id="PRO_0000446944" description="Lipid II isoglutaminyl synthase (glutamine-hydrolyzing) subunit MurT">
    <location>
        <begin position="1"/>
        <end position="437"/>
    </location>
</feature>
<feature type="active site" evidence="1 6">
    <location>
        <position position="349"/>
    </location>
</feature>
<feature type="binding site" evidence="1 3">
    <location>
        <position position="202"/>
    </location>
    <ligand>
        <name>Zn(2+)</name>
        <dbReference type="ChEBI" id="CHEBI:29105"/>
    </ligand>
</feature>
<feature type="binding site" evidence="1 3">
    <location>
        <position position="205"/>
    </location>
    <ligand>
        <name>Zn(2+)</name>
        <dbReference type="ChEBI" id="CHEBI:29105"/>
    </ligand>
</feature>
<feature type="binding site" evidence="1 3">
    <location>
        <position position="224"/>
    </location>
    <ligand>
        <name>Zn(2+)</name>
        <dbReference type="ChEBI" id="CHEBI:29105"/>
    </ligand>
</feature>
<feature type="binding site" evidence="1 3">
    <location>
        <position position="226"/>
    </location>
    <ligand>
        <name>Zn(2+)</name>
        <dbReference type="ChEBI" id="CHEBI:29105"/>
    </ligand>
</feature>
<feature type="mutagenesis site" description="Severe decrease in amidation of lipid II." evidence="3">
    <original>D</original>
    <variation>N</variation>
    <location>
        <position position="349"/>
    </location>
</feature>
<feature type="helix" evidence="10">
    <location>
        <begin position="39"/>
        <end position="45"/>
    </location>
</feature>
<feature type="strand" evidence="10">
    <location>
        <begin position="48"/>
        <end position="58"/>
    </location>
</feature>
<feature type="helix" evidence="10">
    <location>
        <begin position="59"/>
        <end position="71"/>
    </location>
</feature>
<feature type="turn" evidence="10">
    <location>
        <begin position="72"/>
        <end position="74"/>
    </location>
</feature>
<feature type="strand" evidence="10">
    <location>
        <begin position="77"/>
        <end position="79"/>
    </location>
</feature>
<feature type="helix" evidence="10">
    <location>
        <begin position="87"/>
        <end position="97"/>
    </location>
</feature>
<feature type="strand" evidence="10">
    <location>
        <begin position="104"/>
        <end position="108"/>
    </location>
</feature>
<feature type="helix" evidence="10">
    <location>
        <begin position="111"/>
        <end position="113"/>
    </location>
</feature>
<feature type="helix" evidence="10">
    <location>
        <begin position="114"/>
        <end position="118"/>
    </location>
</feature>
<feature type="strand" evidence="10">
    <location>
        <begin position="124"/>
        <end position="128"/>
    </location>
</feature>
<feature type="helix" evidence="10">
    <location>
        <begin position="141"/>
        <end position="153"/>
    </location>
</feature>
<feature type="strand" evidence="10">
    <location>
        <begin position="159"/>
        <end position="163"/>
    </location>
</feature>
<feature type="helix" evidence="10">
    <location>
        <begin position="167"/>
        <end position="170"/>
    </location>
</feature>
<feature type="helix" evidence="10">
    <location>
        <begin position="171"/>
        <end position="175"/>
    </location>
</feature>
<feature type="strand" evidence="10">
    <location>
        <begin position="179"/>
        <end position="184"/>
    </location>
</feature>
<feature type="turn" evidence="10">
    <location>
        <begin position="203"/>
        <end position="205"/>
    </location>
</feature>
<feature type="strand" evidence="10">
    <location>
        <begin position="206"/>
        <end position="208"/>
    </location>
</feature>
<feature type="strand" evidence="10">
    <location>
        <begin position="211"/>
        <end position="216"/>
    </location>
</feature>
<feature type="strand" evidence="10">
    <location>
        <begin position="219"/>
        <end position="223"/>
    </location>
</feature>
<feature type="strand" evidence="11">
    <location>
        <begin position="225"/>
        <end position="227"/>
    </location>
</feature>
<feature type="strand" evidence="10">
    <location>
        <begin position="234"/>
        <end position="250"/>
    </location>
</feature>
<feature type="strand" evidence="10">
    <location>
        <begin position="253"/>
        <end position="256"/>
    </location>
</feature>
<feature type="helix" evidence="10">
    <location>
        <begin position="264"/>
        <end position="277"/>
    </location>
</feature>
<feature type="helix" evidence="10">
    <location>
        <begin position="282"/>
        <end position="289"/>
    </location>
</feature>
<feature type="strand" evidence="10">
    <location>
        <begin position="295"/>
        <end position="304"/>
    </location>
</feature>
<feature type="strand" evidence="10">
    <location>
        <begin position="307"/>
        <end position="311"/>
    </location>
</feature>
<feature type="helix" evidence="10">
    <location>
        <begin position="317"/>
        <end position="328"/>
    </location>
</feature>
<feature type="strand" evidence="10">
    <location>
        <begin position="330"/>
        <end position="332"/>
    </location>
</feature>
<feature type="strand" evidence="10">
    <location>
        <begin position="334"/>
        <end position="339"/>
    </location>
</feature>
<feature type="turn" evidence="10">
    <location>
        <begin position="344"/>
        <end position="346"/>
    </location>
</feature>
<feature type="helix" evidence="10">
    <location>
        <begin position="351"/>
        <end position="354"/>
    </location>
</feature>
<feature type="helix" evidence="10">
    <location>
        <begin position="358"/>
        <end position="363"/>
    </location>
</feature>
<feature type="strand" evidence="10">
    <location>
        <begin position="366"/>
        <end position="373"/>
    </location>
</feature>
<feature type="helix" evidence="10">
    <location>
        <begin position="376"/>
        <end position="385"/>
    </location>
</feature>
<feature type="strand" evidence="10">
    <location>
        <begin position="392"/>
        <end position="394"/>
    </location>
</feature>
<feature type="helix" evidence="10">
    <location>
        <begin position="398"/>
        <end position="404"/>
    </location>
</feature>
<feature type="helix" evidence="10">
    <location>
        <begin position="405"/>
        <end position="407"/>
    </location>
</feature>
<feature type="strand" evidence="10">
    <location>
        <begin position="408"/>
        <end position="416"/>
    </location>
</feature>
<feature type="helix" evidence="10">
    <location>
        <begin position="418"/>
        <end position="420"/>
    </location>
</feature>
<feature type="helix" evidence="10">
    <location>
        <begin position="421"/>
        <end position="432"/>
    </location>
</feature>
<name>MURT_STAAN</name>
<comment type="function">
    <text evidence="2 3">The lipid II isoglutaminyl synthase complex catalyzes the formation of alpha-D-isoglutamine in the cell wall lipid II stem peptide (PubMed:22291598, PubMed:30154570). The MurT subunit catalyzes the ATP-dependent amidation of D-glutamate residue of lipid II, converting it to an isoglutamine residue (PubMed:22291598).</text>
</comment>
<comment type="catalytic activity">
    <reaction evidence="1 2 3">
        <text>beta-D-GlcNAc-(1-&gt;4)-Mur2Ac(oyl-L-Ala-gamma-D-Glu-L-Lys-D-Ala-D-Ala)-di-trans,octa-cis-undecaprenyl diphosphate + L-glutamine + ATP + H2O = beta-D-GlcNAc-(1-&gt;4)-Mur2Ac(oyl-L-Ala-D-isoglutaminyl-L-Lys-D-Ala-D-Ala)-di-trans,octa-cis-undecaprenyl diphosphate + L-glutamate + ADP + phosphate + H(+)</text>
        <dbReference type="Rhea" id="RHEA:57928"/>
        <dbReference type="ChEBI" id="CHEBI:15377"/>
        <dbReference type="ChEBI" id="CHEBI:15378"/>
        <dbReference type="ChEBI" id="CHEBI:29985"/>
        <dbReference type="ChEBI" id="CHEBI:30616"/>
        <dbReference type="ChEBI" id="CHEBI:43474"/>
        <dbReference type="ChEBI" id="CHEBI:58359"/>
        <dbReference type="ChEBI" id="CHEBI:60033"/>
        <dbReference type="ChEBI" id="CHEBI:62233"/>
        <dbReference type="ChEBI" id="CHEBI:456216"/>
        <dbReference type="EC" id="6.3.5.13"/>
    </reaction>
</comment>
<comment type="catalytic activity">
    <reaction evidence="1 2">
        <text>beta-D-GlcNAc-(1-&gt;4)-Mur2Ac(oyl-L-Ala-gamma-D-Glu-L-Lys-D-Ala-D-Ala)-di-trans,octa-cis-undecaprenyl diphosphate + ATP = beta-D-GlcNAc-(1-&gt;4)-Mur2Ac(oyl-L-Ala-gamma-D-O-P-Glu-L-Lys-D-Ala-D-Ala)-di-trans,octa-cis-undecaprenyl diphosphate + ADP</text>
        <dbReference type="Rhea" id="RHEA:59488"/>
        <dbReference type="ChEBI" id="CHEBI:30616"/>
        <dbReference type="ChEBI" id="CHEBI:60033"/>
        <dbReference type="ChEBI" id="CHEBI:143132"/>
        <dbReference type="ChEBI" id="CHEBI:456216"/>
    </reaction>
</comment>
<comment type="catalytic activity">
    <reaction evidence="1 2">
        <text>beta-D-GlcNAc-(1-&gt;4)-Mur2Ac(oyl-L-Ala-gamma-D-O-P-Glu-L-Lys-D-Ala-D-Ala)-di-trans,octa-cis-undecaprenyl diphosphate + NH4(+) = beta-D-GlcNAc-(1-&gt;4)-Mur2Ac(oyl-L-Ala-D-isoglutaminyl-L-Lys-D-Ala-D-Ala)-di-trans,octa-cis-undecaprenyl diphosphate + phosphate + H(+)</text>
        <dbReference type="Rhea" id="RHEA:57932"/>
        <dbReference type="ChEBI" id="CHEBI:15378"/>
        <dbReference type="ChEBI" id="CHEBI:28938"/>
        <dbReference type="ChEBI" id="CHEBI:43474"/>
        <dbReference type="ChEBI" id="CHEBI:62233"/>
        <dbReference type="ChEBI" id="CHEBI:143132"/>
    </reaction>
</comment>
<comment type="biophysicochemical properties">
    <phDependence>
        <text evidence="2">Optimum pH is 7.5-7.8 for isoglutaminyl synthase activity.</text>
    </phDependence>
</comment>
<comment type="pathway">
    <text evidence="1 2">Cell wall biogenesis; peptidoglycan biosynthesis.</text>
</comment>
<comment type="subunit">
    <text evidence="1 2 3">Forms a heterodimer with GatD.</text>
</comment>
<comment type="domain">
    <text evidence="3">Composed of two domains: a Mur ligase middle domain containing the canonical ATP binding site and a ribbon-type zinc finger, and a C-terminal Mur ligase domain. The GatD/MurT complex has an open, boomerang-shaped conformation in which GatD is docked onto one end of MurT. Both proteins contribute to the catalytic triad.</text>
</comment>
<comment type="disruption phenotype">
    <text evidence="2">The gatD-murT double mutant displays susceptibility to diverse carbapenem and cephalosporin beta-lactam antibiotics and shows increased susceptibility to plectasin.</text>
</comment>
<comment type="similarity">
    <text evidence="1 5">Belongs to the MurCDEF family. MurT subfamily.</text>
</comment>
<reference key="1">
    <citation type="journal article" date="2001" name="Lancet">
        <title>Whole genome sequencing of meticillin-resistant Staphylococcus aureus.</title>
        <authorList>
            <person name="Kuroda M."/>
            <person name="Ohta T."/>
            <person name="Uchiyama I."/>
            <person name="Baba T."/>
            <person name="Yuzawa H."/>
            <person name="Kobayashi I."/>
            <person name="Cui L."/>
            <person name="Oguchi A."/>
            <person name="Aoki K."/>
            <person name="Nagai Y."/>
            <person name="Lian J.-Q."/>
            <person name="Ito T."/>
            <person name="Kanamori M."/>
            <person name="Matsumaru H."/>
            <person name="Maruyama A."/>
            <person name="Murakami H."/>
            <person name="Hosoyama A."/>
            <person name="Mizutani-Ui Y."/>
            <person name="Takahashi N.K."/>
            <person name="Sawano T."/>
            <person name="Inoue R."/>
            <person name="Kaito C."/>
            <person name="Sekimizu K."/>
            <person name="Hirakawa H."/>
            <person name="Kuhara S."/>
            <person name="Goto S."/>
            <person name="Yabuzaki J."/>
            <person name="Kanehisa M."/>
            <person name="Yamashita A."/>
            <person name="Oshima K."/>
            <person name="Furuya K."/>
            <person name="Yoshino C."/>
            <person name="Shiba T."/>
            <person name="Hattori M."/>
            <person name="Ogasawara N."/>
            <person name="Hayashi H."/>
            <person name="Hiramatsu K."/>
        </authorList>
    </citation>
    <scope>NUCLEOTIDE SEQUENCE [LARGE SCALE GENOMIC DNA]</scope>
    <source>
        <strain>N315</strain>
    </source>
</reference>
<reference key="2">
    <citation type="journal article" date="2012" name="PLoS Pathog.">
        <title>Identification and in vitro analysis of the GatD/MurT enzyme-complex catalyzing lipid II amidation in Staphylococcus aureus.</title>
        <authorList>
            <person name="Muench D."/>
            <person name="Roemer T."/>
            <person name="Lee S.H."/>
            <person name="Engeser M."/>
            <person name="Sahl H.G."/>
            <person name="Schneider T."/>
        </authorList>
    </citation>
    <scope>FUNCTION</scope>
    <scope>CATALYTIC ACTIVITY</scope>
    <scope>BIOPHYSICOCHEMICAL PROPERTIES</scope>
    <scope>PATHWAY</scope>
    <scope>SUBUNIT</scope>
    <scope>DISRUPTION PHENOTYPE</scope>
    <source>
        <strain>N315</strain>
    </source>
</reference>
<reference evidence="8 9" key="3">
    <citation type="journal article" date="2018" name="Sci. Rep.">
        <title>Structural basis of cell wall peptidoglycan amidation by the GatD/MurT complex of Staphylococcus aureus.</title>
        <authorList>
            <person name="Noldeke E.R."/>
            <person name="Muckenfuss L.M."/>
            <person name="Niemann V."/>
            <person name="Muller A."/>
            <person name="Stork E."/>
            <person name="Zocher G."/>
            <person name="Schneider T."/>
            <person name="Stehle T."/>
        </authorList>
    </citation>
    <scope>X-RAY CRYSTALLOGRAPHY (2.04 ANGSTROMS) IN COMPLEXES WITH GATD AND ZINC</scope>
    <scope>FUNCTION</scope>
    <scope>CATALYTIC ACTIVITY</scope>
    <scope>SUBUNIT</scope>
    <scope>DOMAIN</scope>
    <scope>ACTIVE SITE</scope>
    <scope>MUTAGENESIS OF ASP-349</scope>
</reference>
<gene>
    <name evidence="1 4" type="primary">murT</name>
    <name evidence="7" type="ordered locus">SA1708</name>
</gene>
<organism>
    <name type="scientific">Staphylococcus aureus (strain N315)</name>
    <dbReference type="NCBI Taxonomy" id="158879"/>
    <lineage>
        <taxon>Bacteria</taxon>
        <taxon>Bacillati</taxon>
        <taxon>Bacillota</taxon>
        <taxon>Bacilli</taxon>
        <taxon>Bacillales</taxon>
        <taxon>Staphylococcaceae</taxon>
        <taxon>Staphylococcus</taxon>
    </lineage>
</organism>
<proteinExistence type="evidence at protein level"/>
<protein>
    <recommendedName>
        <fullName evidence="1 5">Lipid II isoglutaminyl synthase (glutamine-hydrolyzing) subunit MurT</fullName>
        <ecNumber evidence="1 2 3">6.3.5.13</ecNumber>
    </recommendedName>
</protein>